<protein>
    <recommendedName>
        <fullName>Putative ankyrin repeat protein L99</fullName>
    </recommendedName>
</protein>
<reference key="1">
    <citation type="journal article" date="2004" name="Science">
        <title>The 1.2-megabase genome sequence of Mimivirus.</title>
        <authorList>
            <person name="Raoult D."/>
            <person name="Audic S."/>
            <person name="Robert C."/>
            <person name="Abergel C."/>
            <person name="Renesto P."/>
            <person name="Ogata H."/>
            <person name="La Scola B."/>
            <person name="Susan M."/>
            <person name="Claverie J.-M."/>
        </authorList>
    </citation>
    <scope>NUCLEOTIDE SEQUENCE [LARGE SCALE GENOMIC DNA]</scope>
    <source>
        <strain>Rowbotham-Bradford</strain>
    </source>
</reference>
<keyword id="KW-0040">ANK repeat</keyword>
<keyword id="KW-1185">Reference proteome</keyword>
<keyword id="KW-0677">Repeat</keyword>
<accession>Q5UPH1</accession>
<gene>
    <name type="ordered locus">MIMI_L99</name>
</gene>
<organismHost>
    <name type="scientific">Acanthamoeba polyphaga</name>
    <name type="common">Amoeba</name>
    <dbReference type="NCBI Taxonomy" id="5757"/>
</organismHost>
<organism>
    <name type="scientific">Acanthamoeba polyphaga mimivirus</name>
    <name type="common">APMV</name>
    <dbReference type="NCBI Taxonomy" id="212035"/>
    <lineage>
        <taxon>Viruses</taxon>
        <taxon>Varidnaviria</taxon>
        <taxon>Bamfordvirae</taxon>
        <taxon>Nucleocytoviricota</taxon>
        <taxon>Megaviricetes</taxon>
        <taxon>Imitervirales</taxon>
        <taxon>Mimiviridae</taxon>
        <taxon>Megamimivirinae</taxon>
        <taxon>Mimivirus</taxon>
        <taxon>Mimivirus bradfordmassiliense</taxon>
    </lineage>
</organism>
<name>YL099_MIMIV</name>
<sequence>MTKIYFVQFIILFCTVISSDKVNPLFMDSIESDNVKEVVKFLNQGVDVHAHEDYALKYSSFKCNLELVKVLISHGANIHSDRDLALHYAAQQGCFEVVKYLIKNGANVNARQNSALIRACDSHHYEMIKYLIDKGANIHAKNNFCLRNSVLHHKWEIFTYLMNNGADINADNGAALFIAASDNDISAIIMLNAYNADMCIDNCKALLSAAHLGNLDTVKYYTSHSICDTKNELKALTYAYNNNQYHVFDYLLSKSNINSKI</sequence>
<feature type="chain" id="PRO_0000067154" description="Putative ankyrin repeat protein L99">
    <location>
        <begin position="1"/>
        <end position="261"/>
    </location>
</feature>
<feature type="repeat" description="ANK 1">
    <location>
        <begin position="21"/>
        <end position="50"/>
    </location>
</feature>
<feature type="repeat" description="ANK 2">
    <location>
        <begin position="51"/>
        <end position="80"/>
    </location>
</feature>
<feature type="repeat" description="ANK 3">
    <location>
        <begin position="81"/>
        <end position="110"/>
    </location>
</feature>
<feature type="repeat" description="ANK 4">
    <location>
        <begin position="112"/>
        <end position="140"/>
    </location>
</feature>
<feature type="repeat" description="ANK 5">
    <location>
        <begin position="142"/>
        <end position="170"/>
    </location>
</feature>
<feature type="repeat" description="ANK 6">
    <location>
        <begin position="171"/>
        <end position="203"/>
    </location>
</feature>
<feature type="repeat" description="ANK 7">
    <location>
        <begin position="231"/>
        <end position="259"/>
    </location>
</feature>
<dbReference type="EMBL" id="AY653733">
    <property type="protein sequence ID" value="AAV50374.1"/>
    <property type="molecule type" value="Genomic_DNA"/>
</dbReference>
<dbReference type="SMR" id="Q5UPH1"/>
<dbReference type="KEGG" id="vg:9924697"/>
<dbReference type="Proteomes" id="UP000001134">
    <property type="component" value="Genome"/>
</dbReference>
<dbReference type="Gene3D" id="1.25.40.20">
    <property type="entry name" value="Ankyrin repeat-containing domain"/>
    <property type="match status" value="2"/>
</dbReference>
<dbReference type="InterPro" id="IPR002110">
    <property type="entry name" value="Ankyrin_rpt"/>
</dbReference>
<dbReference type="InterPro" id="IPR036770">
    <property type="entry name" value="Ankyrin_rpt-contain_sf"/>
</dbReference>
<dbReference type="PANTHER" id="PTHR44207">
    <property type="entry name" value="SURFACE ANTIGEN BSPA-LIKE-RELATED"/>
    <property type="match status" value="1"/>
</dbReference>
<dbReference type="Pfam" id="PF12796">
    <property type="entry name" value="Ank_2"/>
    <property type="match status" value="2"/>
</dbReference>
<dbReference type="SMART" id="SM00248">
    <property type="entry name" value="ANK"/>
    <property type="match status" value="7"/>
</dbReference>
<dbReference type="SUPFAM" id="SSF48403">
    <property type="entry name" value="Ankyrin repeat"/>
    <property type="match status" value="1"/>
</dbReference>
<dbReference type="PROSITE" id="PS50297">
    <property type="entry name" value="ANK_REP_REGION"/>
    <property type="match status" value="1"/>
</dbReference>
<dbReference type="PROSITE" id="PS50088">
    <property type="entry name" value="ANK_REPEAT"/>
    <property type="match status" value="2"/>
</dbReference>
<proteinExistence type="predicted"/>